<keyword id="KW-1185">Reference proteome</keyword>
<keyword id="KW-0687">Ribonucleoprotein</keyword>
<keyword id="KW-0689">Ribosomal protein</keyword>
<comment type="subunit">
    <text evidence="1">Part of the 50S ribosomal subunit.</text>
</comment>
<comment type="similarity">
    <text evidence="1">Belongs to the universal ribosomal protein uL30 family.</text>
</comment>
<organism>
    <name type="scientific">Kocuria rhizophila (strain ATCC 9341 / DSM 348 / NBRC 103217 / DC2201)</name>
    <dbReference type="NCBI Taxonomy" id="378753"/>
    <lineage>
        <taxon>Bacteria</taxon>
        <taxon>Bacillati</taxon>
        <taxon>Actinomycetota</taxon>
        <taxon>Actinomycetes</taxon>
        <taxon>Micrococcales</taxon>
        <taxon>Micrococcaceae</taxon>
        <taxon>Kocuria</taxon>
    </lineage>
</organism>
<reference key="1">
    <citation type="journal article" date="2008" name="J. Bacteriol.">
        <title>Complete genome sequence of the soil actinomycete Kocuria rhizophila.</title>
        <authorList>
            <person name="Takarada H."/>
            <person name="Sekine M."/>
            <person name="Kosugi H."/>
            <person name="Matsuo Y."/>
            <person name="Fujisawa T."/>
            <person name="Omata S."/>
            <person name="Kishi E."/>
            <person name="Shimizu A."/>
            <person name="Tsukatani N."/>
            <person name="Tanikawa S."/>
            <person name="Fujita N."/>
            <person name="Harayama S."/>
        </authorList>
    </citation>
    <scope>NUCLEOTIDE SEQUENCE [LARGE SCALE GENOMIC DNA]</scope>
    <source>
        <strain>ATCC 9341 / DSM 348 / NBRC 103217 / DC2201</strain>
    </source>
</reference>
<feature type="chain" id="PRO_0000347107" description="Large ribosomal subunit protein uL30">
    <location>
        <begin position="1"/>
        <end position="68"/>
    </location>
</feature>
<sequence length="68" mass="7443">MNGKRIQATGATLRVKQVRSVVGQKQNMRDTLRSLGLKRPGQVVERKADAATVGMINTVTHLVEVEEA</sequence>
<accession>B2GJ10</accession>
<gene>
    <name evidence="1" type="primary">rpmD</name>
    <name type="ordered locus">KRH_06330</name>
</gene>
<name>RL30_KOCRD</name>
<proteinExistence type="inferred from homology"/>
<protein>
    <recommendedName>
        <fullName evidence="1">Large ribosomal subunit protein uL30</fullName>
    </recommendedName>
    <alternativeName>
        <fullName evidence="2">50S ribosomal protein L30</fullName>
    </alternativeName>
</protein>
<dbReference type="EMBL" id="AP009152">
    <property type="protein sequence ID" value="BAG28980.1"/>
    <property type="molecule type" value="Genomic_DNA"/>
</dbReference>
<dbReference type="RefSeq" id="WP_012397705.1">
    <property type="nucleotide sequence ID" value="NZ_VECX01000001.1"/>
</dbReference>
<dbReference type="SMR" id="B2GJ10"/>
<dbReference type="STRING" id="378753.KRH_06330"/>
<dbReference type="GeneID" id="93232761"/>
<dbReference type="KEGG" id="krh:KRH_06330"/>
<dbReference type="eggNOG" id="COG1841">
    <property type="taxonomic scope" value="Bacteria"/>
</dbReference>
<dbReference type="HOGENOM" id="CLU_131047_2_0_11"/>
<dbReference type="OrthoDB" id="9812790at2"/>
<dbReference type="Proteomes" id="UP000008838">
    <property type="component" value="Chromosome"/>
</dbReference>
<dbReference type="GO" id="GO:0022625">
    <property type="term" value="C:cytosolic large ribosomal subunit"/>
    <property type="evidence" value="ECO:0007669"/>
    <property type="project" value="TreeGrafter"/>
</dbReference>
<dbReference type="GO" id="GO:0003735">
    <property type="term" value="F:structural constituent of ribosome"/>
    <property type="evidence" value="ECO:0007669"/>
    <property type="project" value="InterPro"/>
</dbReference>
<dbReference type="GO" id="GO:0006412">
    <property type="term" value="P:translation"/>
    <property type="evidence" value="ECO:0007669"/>
    <property type="project" value="UniProtKB-UniRule"/>
</dbReference>
<dbReference type="CDD" id="cd01658">
    <property type="entry name" value="Ribosomal_L30"/>
    <property type="match status" value="1"/>
</dbReference>
<dbReference type="Gene3D" id="3.30.1390.20">
    <property type="entry name" value="Ribosomal protein L30, ferredoxin-like fold domain"/>
    <property type="match status" value="1"/>
</dbReference>
<dbReference type="HAMAP" id="MF_01371_B">
    <property type="entry name" value="Ribosomal_uL30_B"/>
    <property type="match status" value="1"/>
</dbReference>
<dbReference type="InterPro" id="IPR036919">
    <property type="entry name" value="Ribo_uL30_ferredoxin-like_sf"/>
</dbReference>
<dbReference type="InterPro" id="IPR005996">
    <property type="entry name" value="Ribosomal_uL30_bac-type"/>
</dbReference>
<dbReference type="InterPro" id="IPR018038">
    <property type="entry name" value="Ribosomal_uL30_CS"/>
</dbReference>
<dbReference type="InterPro" id="IPR016082">
    <property type="entry name" value="Ribosomal_uL30_ferredoxin-like"/>
</dbReference>
<dbReference type="NCBIfam" id="TIGR01308">
    <property type="entry name" value="rpmD_bact"/>
    <property type="match status" value="1"/>
</dbReference>
<dbReference type="PANTHER" id="PTHR15892:SF2">
    <property type="entry name" value="LARGE RIBOSOMAL SUBUNIT PROTEIN UL30M"/>
    <property type="match status" value="1"/>
</dbReference>
<dbReference type="PANTHER" id="PTHR15892">
    <property type="entry name" value="MITOCHONDRIAL RIBOSOMAL PROTEIN L30"/>
    <property type="match status" value="1"/>
</dbReference>
<dbReference type="Pfam" id="PF00327">
    <property type="entry name" value="Ribosomal_L30"/>
    <property type="match status" value="1"/>
</dbReference>
<dbReference type="PIRSF" id="PIRSF002211">
    <property type="entry name" value="Ribosomal_L30_bac-type"/>
    <property type="match status" value="1"/>
</dbReference>
<dbReference type="SUPFAM" id="SSF55129">
    <property type="entry name" value="Ribosomal protein L30p/L7e"/>
    <property type="match status" value="1"/>
</dbReference>
<dbReference type="PROSITE" id="PS00634">
    <property type="entry name" value="RIBOSOMAL_L30"/>
    <property type="match status" value="1"/>
</dbReference>
<evidence type="ECO:0000255" key="1">
    <source>
        <dbReference type="HAMAP-Rule" id="MF_01371"/>
    </source>
</evidence>
<evidence type="ECO:0000305" key="2"/>